<gene>
    <name evidence="6" type="primary">gur-3</name>
    <name evidence="6" type="ORF">ZC504.5</name>
</gene>
<feature type="chain" id="PRO_0000439037" description="Gustatory receptor family protein 3">
    <location>
        <begin position="1"/>
        <end position="447"/>
    </location>
</feature>
<feature type="topological domain" description="Extracellular" evidence="5">
    <location>
        <begin position="1"/>
        <end position="69"/>
    </location>
</feature>
<feature type="transmembrane region" description="Helical" evidence="1">
    <location>
        <begin position="70"/>
        <end position="90"/>
    </location>
</feature>
<feature type="topological domain" description="Cytoplasmic" evidence="5">
    <location>
        <begin position="91"/>
        <end position="116"/>
    </location>
</feature>
<feature type="transmembrane region" description="Helical" evidence="1">
    <location>
        <begin position="117"/>
        <end position="137"/>
    </location>
</feature>
<feature type="topological domain" description="Extracellular" evidence="5">
    <location>
        <begin position="138"/>
        <end position="171"/>
    </location>
</feature>
<feature type="transmembrane region" description="Helical" evidence="1">
    <location>
        <begin position="172"/>
        <end position="192"/>
    </location>
</feature>
<feature type="topological domain" description="Cytoplasmic" evidence="5">
    <location>
        <begin position="193"/>
        <end position="211"/>
    </location>
</feature>
<feature type="transmembrane region" description="Helical" evidence="1">
    <location>
        <begin position="212"/>
        <end position="232"/>
    </location>
</feature>
<feature type="topological domain" description="Extracellular" evidence="5">
    <location>
        <begin position="233"/>
        <end position="292"/>
    </location>
</feature>
<feature type="transmembrane region" description="Helical" evidence="1">
    <location>
        <begin position="293"/>
        <end position="313"/>
    </location>
</feature>
<feature type="topological domain" description="Cytoplasmic" evidence="5">
    <location>
        <begin position="314"/>
        <end position="328"/>
    </location>
</feature>
<feature type="transmembrane region" description="Helical" evidence="1">
    <location>
        <begin position="329"/>
        <end position="349"/>
    </location>
</feature>
<feature type="topological domain" description="Extracellular" evidence="5">
    <location>
        <begin position="350"/>
        <end position="405"/>
    </location>
</feature>
<feature type="transmembrane region" description="Helical" evidence="1">
    <location>
        <begin position="406"/>
        <end position="426"/>
    </location>
</feature>
<feature type="topological domain" description="Cytoplasmic" evidence="5">
    <location>
        <begin position="427"/>
        <end position="447"/>
    </location>
</feature>
<feature type="mutagenesis site" description="Induces sensitivity to UV-B light." evidence="4">
    <original>Y</original>
    <variation>W</variation>
    <location>
        <position position="79"/>
    </location>
</feature>
<feature type="sequence conflict" description="In Ref. 1; AAK70489." evidence="5" ref="1">
    <original>N</original>
    <variation>S</variation>
    <location>
        <position position="7"/>
    </location>
</feature>
<feature type="sequence conflict" description="In Ref. 1; AAK70489." evidence="5" ref="1">
    <original>H</original>
    <variation>L</variation>
    <location>
        <position position="62"/>
    </location>
</feature>
<evidence type="ECO:0000255" key="1"/>
<evidence type="ECO:0000269" key="2">
    <source>
    </source>
</evidence>
<evidence type="ECO:0000269" key="3">
    <source>
    </source>
</evidence>
<evidence type="ECO:0000269" key="4">
    <source>
    </source>
</evidence>
<evidence type="ECO:0000305" key="5"/>
<evidence type="ECO:0000312" key="6">
    <source>
        <dbReference type="WormBase" id="ZC504.5"/>
    </source>
</evidence>
<organism>
    <name type="scientific">Caenorhabditis elegans</name>
    <dbReference type="NCBI Taxonomy" id="6239"/>
    <lineage>
        <taxon>Eukaryota</taxon>
        <taxon>Metazoa</taxon>
        <taxon>Ecdysozoa</taxon>
        <taxon>Nematoda</taxon>
        <taxon>Chromadorea</taxon>
        <taxon>Rhabditida</taxon>
        <taxon>Rhabditina</taxon>
        <taxon>Rhabditomorpha</taxon>
        <taxon>Rhabditoidea</taxon>
        <taxon>Rhabditidae</taxon>
        <taxon>Peloderinae</taxon>
        <taxon>Caenorhabditis</taxon>
    </lineage>
</organism>
<sequence length="447" mass="51228">MTITASNTLEFKWTSPRSSRSSFRTTTDAEQKISIDMSNTYCDQVLGPLYSYMMVLGLNHTHSSARNTMFKWPLTIYNYLTLAILTAATIRRISQIKQKSATNEEKDAAFHVLNPTFVLTLCHALLMFSGLAAGFLLLKLQKQREKMYHVLDQGLGRNRNEEHDSHHFKLNKLFISISFSFAAALSFVQIATKMRYLDLPDTPDLINRKIYFVILEGYVIFIASSCISLVAILFFQLCRILQFSIGQLIEEMVPKEKEECPLPEQSLQQIHDVQIHYQEISNAKLYIEQNFSFSLFYTYGCCIPLTCLLGYIAFRNGIQADMAETFSVAIWLTNTMLALMLFSIPAFMIAEEGDKLLTASFKMYHETLCEERDLLVLSQMSFLSFQMHATKLTLTAGNFFMMNRKIMISLFSAIFTYFLILVQFDAEKERAGECNNQSRVLIVQPPV</sequence>
<proteinExistence type="evidence at protein level"/>
<keyword id="KW-0472">Membrane</keyword>
<keyword id="KW-0675">Receptor</keyword>
<keyword id="KW-1185">Reference proteome</keyword>
<keyword id="KW-0812">Transmembrane</keyword>
<keyword id="KW-1133">Transmembrane helix</keyword>
<reference key="1">
    <citation type="submission" date="2001-06" db="EMBL/GenBank/DDBJ databases">
        <title>Gustatory related receptors in nematodes.</title>
        <authorList>
            <person name="Robertson H.M."/>
        </authorList>
    </citation>
    <scope>NUCLEOTIDE SEQUENCE [MRNA]</scope>
</reference>
<reference key="2">
    <citation type="journal article" date="1998" name="Science">
        <title>Genome sequence of the nematode C. elegans: a platform for investigating biology.</title>
        <authorList>
            <consortium name="The C. elegans sequencing consortium"/>
        </authorList>
    </citation>
    <scope>NUCLEOTIDE SEQUENCE [LARGE SCALE GENOMIC DNA]</scope>
    <source>
        <strain>Bristol N2</strain>
    </source>
</reference>
<reference key="3">
    <citation type="journal article" date="2015" name="Neuron">
        <title>Light and hydrogen peroxide inhibit C. elegans Feeding through gustatory receptor orthologs and pharyngeal neurons.</title>
        <authorList>
            <person name="Bhatla N."/>
            <person name="Horvitz H.R."/>
        </authorList>
    </citation>
    <scope>FUNCTION</scope>
    <scope>TISSUE SPECIFICITY</scope>
</reference>
<reference key="4">
    <citation type="journal article" date="2016" name="Cell">
        <title>The C. elegans taste receptor homolog LITE-1 is a photoreceptor.</title>
        <authorList>
            <person name="Gong J."/>
            <person name="Yuan Y."/>
            <person name="Ward A."/>
            <person name="Kang L."/>
            <person name="Zhang B."/>
            <person name="Wu Z."/>
            <person name="Peng J."/>
            <person name="Feng Z."/>
            <person name="Liu J."/>
            <person name="Xu X.Z."/>
        </authorList>
    </citation>
    <scope>FUNCTION</scope>
    <scope>MUTAGENESIS OF TYR-79</scope>
</reference>
<reference key="5">
    <citation type="journal article" date="2016" name="Proc. Natl. Acad. Sci. U.S.A.">
        <title>Circadian rhythms identified in Caenorhabditis elegans by in vivo long-term monitoring of a bioluminescent reporter.</title>
        <authorList>
            <person name="Goya M.E."/>
            <person name="Romanowski A."/>
            <person name="Caldart C.S."/>
            <person name="Benard C.Y."/>
            <person name="Golombek D.A."/>
        </authorList>
    </citation>
    <scope>FUNCTION</scope>
</reference>
<dbReference type="EMBL" id="AF387606">
    <property type="protein sequence ID" value="AAK70489.1"/>
    <property type="molecule type" value="mRNA"/>
</dbReference>
<dbReference type="EMBL" id="BX284606">
    <property type="protein sequence ID" value="CAA90343.3"/>
    <property type="molecule type" value="Genomic_DNA"/>
</dbReference>
<dbReference type="PIR" id="T27621">
    <property type="entry name" value="T27621"/>
</dbReference>
<dbReference type="RefSeq" id="NP_509743.2">
    <property type="nucleotide sequence ID" value="NM_077342.4"/>
</dbReference>
<dbReference type="SMR" id="O18280"/>
<dbReference type="FunCoup" id="O18280">
    <property type="interactions" value="321"/>
</dbReference>
<dbReference type="STRING" id="6239.ZC504.5.1"/>
<dbReference type="TCDB" id="1.A.69.3.8">
    <property type="family name" value="the heteromeric odorant receptor channel (horc) family"/>
</dbReference>
<dbReference type="PaxDb" id="6239-ZC504.5"/>
<dbReference type="EnsemblMetazoa" id="ZC504.5.1">
    <property type="protein sequence ID" value="ZC504.5.1"/>
    <property type="gene ID" value="WBGene00001804"/>
</dbReference>
<dbReference type="GeneID" id="181245"/>
<dbReference type="KEGG" id="cel:CELE_ZC504.5"/>
<dbReference type="UCSC" id="ZC504.5">
    <property type="organism name" value="c. elegans"/>
</dbReference>
<dbReference type="AGR" id="WB:WBGene00001804"/>
<dbReference type="CTD" id="181245"/>
<dbReference type="WormBase" id="ZC504.5">
    <property type="protein sequence ID" value="CE30223"/>
    <property type="gene ID" value="WBGene00001804"/>
    <property type="gene designation" value="gur-3"/>
</dbReference>
<dbReference type="eggNOG" id="ENOG502SZ0X">
    <property type="taxonomic scope" value="Eukaryota"/>
</dbReference>
<dbReference type="HOGENOM" id="CLU_625900_0_0_1"/>
<dbReference type="InParanoid" id="O18280"/>
<dbReference type="OMA" id="ERAGECN"/>
<dbReference type="OrthoDB" id="5795306at2759"/>
<dbReference type="PhylomeDB" id="O18280"/>
<dbReference type="PRO" id="PR:O18280"/>
<dbReference type="Proteomes" id="UP000001940">
    <property type="component" value="Chromosome X"/>
</dbReference>
<dbReference type="Bgee" id="WBGene00001804">
    <property type="expression patterns" value="Expressed in pharyngeal muscle cell (C elegans)"/>
</dbReference>
<dbReference type="GO" id="GO:0030424">
    <property type="term" value="C:axon"/>
    <property type="evidence" value="ECO:0000318"/>
    <property type="project" value="GO_Central"/>
</dbReference>
<dbReference type="GO" id="GO:0030425">
    <property type="term" value="C:dendrite"/>
    <property type="evidence" value="ECO:0000318"/>
    <property type="project" value="GO_Central"/>
</dbReference>
<dbReference type="GO" id="GO:0016020">
    <property type="term" value="C:membrane"/>
    <property type="evidence" value="ECO:0007669"/>
    <property type="project" value="UniProtKB-SubCell"/>
</dbReference>
<dbReference type="GO" id="GO:0043025">
    <property type="term" value="C:neuronal cell body"/>
    <property type="evidence" value="ECO:0000318"/>
    <property type="project" value="GO_Central"/>
</dbReference>
<dbReference type="GO" id="GO:0005634">
    <property type="term" value="C:nucleus"/>
    <property type="evidence" value="ECO:0007005"/>
    <property type="project" value="WormBase"/>
</dbReference>
<dbReference type="GO" id="GO:0038023">
    <property type="term" value="F:signaling receptor activity"/>
    <property type="evidence" value="ECO:0007669"/>
    <property type="project" value="UniProtKB-ARBA"/>
</dbReference>
<dbReference type="GO" id="GO:0051606">
    <property type="term" value="P:detection of stimulus"/>
    <property type="evidence" value="ECO:0007669"/>
    <property type="project" value="UniProtKB-ARBA"/>
</dbReference>
<dbReference type="GO" id="GO:0050909">
    <property type="term" value="P:sensory perception of taste"/>
    <property type="evidence" value="ECO:0007669"/>
    <property type="project" value="InterPro"/>
</dbReference>
<dbReference type="InterPro" id="IPR013604">
    <property type="entry name" value="7TM_chemorcpt"/>
</dbReference>
<dbReference type="PANTHER" id="PTHR21421">
    <property type="entry name" value="GUSTATORY RECEPTOR"/>
    <property type="match status" value="1"/>
</dbReference>
<dbReference type="PANTHER" id="PTHR21421:SF29">
    <property type="entry name" value="GUSTATORY RECEPTOR 5A FOR TREHALOSE-RELATED"/>
    <property type="match status" value="1"/>
</dbReference>
<dbReference type="Pfam" id="PF08395">
    <property type="entry name" value="7tm_7"/>
    <property type="match status" value="1"/>
</dbReference>
<accession>O18280</accession>
<accession>Q963E7</accession>
<comment type="function">
    <text evidence="2 3 4">Chemoreceptor involved in light-induced avoidance behavior (PubMed:25640076). Probably acts as a molecular sensor in I2 pharyngeal neurons, required for the inhibition of feeding in response to light and hydrogen peroxide (PubMed:25640076). Involved in circadian rhythms, probably by acting as a light sensor (PubMed:27849618). In contrast to lite-1, does not act as a photoreceptor (PubMed:27863243).</text>
</comment>
<comment type="subcellular location">
    <subcellularLocation>
        <location evidence="1">Membrane</location>
        <topology evidence="1">Multi-pass membrane protein</topology>
    </subcellularLocation>
</comment>
<comment type="tissue specificity">
    <text evidence="2">Expressed in I2 pharyngeal neurons.</text>
</comment>
<comment type="similarity">
    <text evidence="5">Belongs to the insect chemoreceptor superfamily. Gustatory receptor (GR) family.</text>
</comment>
<protein>
    <recommendedName>
        <fullName>Gustatory receptor family protein 3</fullName>
    </recommendedName>
</protein>
<name>GUR3_CAEEL</name>